<reference key="1">
    <citation type="submission" date="2008-01" db="EMBL/GenBank/DDBJ databases">
        <title>Complete sequence of Shewanella halifaxensis HAW-EB4.</title>
        <authorList>
            <consortium name="US DOE Joint Genome Institute"/>
            <person name="Copeland A."/>
            <person name="Lucas S."/>
            <person name="Lapidus A."/>
            <person name="Glavina del Rio T."/>
            <person name="Dalin E."/>
            <person name="Tice H."/>
            <person name="Bruce D."/>
            <person name="Goodwin L."/>
            <person name="Pitluck S."/>
            <person name="Sims D."/>
            <person name="Brettin T."/>
            <person name="Detter J.C."/>
            <person name="Han C."/>
            <person name="Kuske C.R."/>
            <person name="Schmutz J."/>
            <person name="Larimer F."/>
            <person name="Land M."/>
            <person name="Hauser L."/>
            <person name="Kyrpides N."/>
            <person name="Kim E."/>
            <person name="Zhao J.-S."/>
            <person name="Richardson P."/>
        </authorList>
    </citation>
    <scope>NUCLEOTIDE SEQUENCE [LARGE SCALE GENOMIC DNA]</scope>
    <source>
        <strain>HAW-EB4</strain>
    </source>
</reference>
<feature type="chain" id="PRO_1000083809" description="ATP synthase gamma chain">
    <location>
        <begin position="1"/>
        <end position="286"/>
    </location>
</feature>
<proteinExistence type="inferred from homology"/>
<evidence type="ECO:0000255" key="1">
    <source>
        <dbReference type="HAMAP-Rule" id="MF_00815"/>
    </source>
</evidence>
<comment type="function">
    <text evidence="1">Produces ATP from ADP in the presence of a proton gradient across the membrane. The gamma chain is believed to be important in regulating ATPase activity and the flow of protons through the CF(0) complex.</text>
</comment>
<comment type="subunit">
    <text evidence="1">F-type ATPases have 2 components, CF(1) - the catalytic core - and CF(0) - the membrane proton channel. CF(1) has five subunits: alpha(3), beta(3), gamma(1), delta(1), epsilon(1). CF(0) has three main subunits: a, b and c.</text>
</comment>
<comment type="subcellular location">
    <subcellularLocation>
        <location evidence="1">Cell inner membrane</location>
        <topology evidence="1">Peripheral membrane protein</topology>
    </subcellularLocation>
</comment>
<comment type="similarity">
    <text evidence="1">Belongs to the ATPase gamma chain family.</text>
</comment>
<name>ATPG_SHEHH</name>
<organism>
    <name type="scientific">Shewanella halifaxensis (strain HAW-EB4)</name>
    <dbReference type="NCBI Taxonomy" id="458817"/>
    <lineage>
        <taxon>Bacteria</taxon>
        <taxon>Pseudomonadati</taxon>
        <taxon>Pseudomonadota</taxon>
        <taxon>Gammaproteobacteria</taxon>
        <taxon>Alteromonadales</taxon>
        <taxon>Shewanellaceae</taxon>
        <taxon>Shewanella</taxon>
    </lineage>
</organism>
<gene>
    <name evidence="1" type="primary">atpG</name>
    <name type="ordered locus">Shal_4295</name>
</gene>
<sequence>MANAKEIKTKIASVKNTQKITSAMEMVAASKMRRAQDRMAASRPYAENMRKVIGHVAQGSLEYKHPYLEVREAKRVGYIVVSTDRGLCGGLNVNLFKKVIADVKKQREAGAEVEFCTIGARSAQFFNSFGGQVSASASGLGDAPKLVDLIGTVRVMLEAYNEGKLDRLYVVFNKFVNTMAQTPVIEQLLPLPKSEEGEFTHQWDYIYEPDPKLLLDTLLVRFVESQVYQGVVENIASEQAARMVAMKAATDNAGELIDDLQLVYNKARQAAITQELSEIVAGAAAV</sequence>
<protein>
    <recommendedName>
        <fullName evidence="1">ATP synthase gamma chain</fullName>
    </recommendedName>
    <alternativeName>
        <fullName evidence="1">ATP synthase F1 sector gamma subunit</fullName>
    </alternativeName>
    <alternativeName>
        <fullName evidence="1">F-ATPase gamma subunit</fullName>
    </alternativeName>
</protein>
<keyword id="KW-0066">ATP synthesis</keyword>
<keyword id="KW-0997">Cell inner membrane</keyword>
<keyword id="KW-1003">Cell membrane</keyword>
<keyword id="KW-0139">CF(1)</keyword>
<keyword id="KW-0375">Hydrogen ion transport</keyword>
<keyword id="KW-0406">Ion transport</keyword>
<keyword id="KW-0472">Membrane</keyword>
<keyword id="KW-0813">Transport</keyword>
<dbReference type="EMBL" id="CP000931">
    <property type="protein sequence ID" value="ABZ78835.1"/>
    <property type="molecule type" value="Genomic_DNA"/>
</dbReference>
<dbReference type="RefSeq" id="WP_012279339.1">
    <property type="nucleotide sequence ID" value="NC_010334.1"/>
</dbReference>
<dbReference type="SMR" id="B0TQF5"/>
<dbReference type="STRING" id="458817.Shal_4295"/>
<dbReference type="KEGG" id="shl:Shal_4295"/>
<dbReference type="eggNOG" id="COG0224">
    <property type="taxonomic scope" value="Bacteria"/>
</dbReference>
<dbReference type="HOGENOM" id="CLU_050669_0_1_6"/>
<dbReference type="OrthoDB" id="9812769at2"/>
<dbReference type="Proteomes" id="UP000001317">
    <property type="component" value="Chromosome"/>
</dbReference>
<dbReference type="GO" id="GO:0005886">
    <property type="term" value="C:plasma membrane"/>
    <property type="evidence" value="ECO:0007669"/>
    <property type="project" value="UniProtKB-SubCell"/>
</dbReference>
<dbReference type="GO" id="GO:0045259">
    <property type="term" value="C:proton-transporting ATP synthase complex"/>
    <property type="evidence" value="ECO:0007669"/>
    <property type="project" value="UniProtKB-KW"/>
</dbReference>
<dbReference type="GO" id="GO:0005524">
    <property type="term" value="F:ATP binding"/>
    <property type="evidence" value="ECO:0007669"/>
    <property type="project" value="UniProtKB-UniRule"/>
</dbReference>
<dbReference type="GO" id="GO:0046933">
    <property type="term" value="F:proton-transporting ATP synthase activity, rotational mechanism"/>
    <property type="evidence" value="ECO:0007669"/>
    <property type="project" value="UniProtKB-UniRule"/>
</dbReference>
<dbReference type="GO" id="GO:0042777">
    <property type="term" value="P:proton motive force-driven plasma membrane ATP synthesis"/>
    <property type="evidence" value="ECO:0007669"/>
    <property type="project" value="UniProtKB-UniRule"/>
</dbReference>
<dbReference type="CDD" id="cd12151">
    <property type="entry name" value="F1-ATPase_gamma"/>
    <property type="match status" value="1"/>
</dbReference>
<dbReference type="FunFam" id="1.10.287.80:FF:000005">
    <property type="entry name" value="ATP synthase gamma chain"/>
    <property type="match status" value="2"/>
</dbReference>
<dbReference type="FunFam" id="3.40.1380.10:FF:000001">
    <property type="entry name" value="ATP synthase gamma chain"/>
    <property type="match status" value="1"/>
</dbReference>
<dbReference type="Gene3D" id="3.40.1380.10">
    <property type="match status" value="1"/>
</dbReference>
<dbReference type="Gene3D" id="1.10.287.80">
    <property type="entry name" value="ATP synthase, gamma subunit, helix hairpin domain"/>
    <property type="match status" value="1"/>
</dbReference>
<dbReference type="HAMAP" id="MF_00815">
    <property type="entry name" value="ATP_synth_gamma_bact"/>
    <property type="match status" value="1"/>
</dbReference>
<dbReference type="InterPro" id="IPR035968">
    <property type="entry name" value="ATP_synth_F1_ATPase_gsu"/>
</dbReference>
<dbReference type="InterPro" id="IPR000131">
    <property type="entry name" value="ATP_synth_F1_gsu"/>
</dbReference>
<dbReference type="InterPro" id="IPR023632">
    <property type="entry name" value="ATP_synth_F1_gsu_CS"/>
</dbReference>
<dbReference type="NCBIfam" id="TIGR01146">
    <property type="entry name" value="ATPsyn_F1gamma"/>
    <property type="match status" value="1"/>
</dbReference>
<dbReference type="NCBIfam" id="NF004144">
    <property type="entry name" value="PRK05621.1-1"/>
    <property type="match status" value="1"/>
</dbReference>
<dbReference type="PANTHER" id="PTHR11693">
    <property type="entry name" value="ATP SYNTHASE GAMMA CHAIN"/>
    <property type="match status" value="1"/>
</dbReference>
<dbReference type="PANTHER" id="PTHR11693:SF22">
    <property type="entry name" value="ATP SYNTHASE SUBUNIT GAMMA, MITOCHONDRIAL"/>
    <property type="match status" value="1"/>
</dbReference>
<dbReference type="Pfam" id="PF00231">
    <property type="entry name" value="ATP-synt"/>
    <property type="match status" value="1"/>
</dbReference>
<dbReference type="PRINTS" id="PR00126">
    <property type="entry name" value="ATPASEGAMMA"/>
</dbReference>
<dbReference type="SUPFAM" id="SSF52943">
    <property type="entry name" value="ATP synthase (F1-ATPase), gamma subunit"/>
    <property type="match status" value="1"/>
</dbReference>
<dbReference type="PROSITE" id="PS00153">
    <property type="entry name" value="ATPASE_GAMMA"/>
    <property type="match status" value="1"/>
</dbReference>
<accession>B0TQF5</accession>